<reference key="1">
    <citation type="submission" date="2007-06" db="EMBL/GenBank/DDBJ databases">
        <title>Complete sequence of chromosome of Staphylococcus aureus subsp. aureus JH1.</title>
        <authorList>
            <consortium name="US DOE Joint Genome Institute"/>
            <person name="Copeland A."/>
            <person name="Lucas S."/>
            <person name="Lapidus A."/>
            <person name="Barry K."/>
            <person name="Detter J.C."/>
            <person name="Glavina del Rio T."/>
            <person name="Hammon N."/>
            <person name="Israni S."/>
            <person name="Dalin E."/>
            <person name="Tice H."/>
            <person name="Pitluck S."/>
            <person name="Chain P."/>
            <person name="Malfatti S."/>
            <person name="Shin M."/>
            <person name="Vergez L."/>
            <person name="Schmutz J."/>
            <person name="Larimer F."/>
            <person name="Land M."/>
            <person name="Hauser L."/>
            <person name="Kyrpides N."/>
            <person name="Ivanova N."/>
            <person name="Tomasz A."/>
            <person name="Richardson P."/>
        </authorList>
    </citation>
    <scope>NUCLEOTIDE SEQUENCE [LARGE SCALE GENOMIC DNA]</scope>
    <source>
        <strain>JH1</strain>
    </source>
</reference>
<accession>A6U459</accession>
<keyword id="KW-0369">Histidine metabolism</keyword>
<keyword id="KW-0378">Hydrolase</keyword>
<keyword id="KW-0464">Manganese</keyword>
<keyword id="KW-0479">Metal-binding</keyword>
<organism>
    <name type="scientific">Staphylococcus aureus (strain JH1)</name>
    <dbReference type="NCBI Taxonomy" id="359787"/>
    <lineage>
        <taxon>Bacteria</taxon>
        <taxon>Bacillati</taxon>
        <taxon>Bacillota</taxon>
        <taxon>Bacilli</taxon>
        <taxon>Bacillales</taxon>
        <taxon>Staphylococcaceae</taxon>
        <taxon>Staphylococcus</taxon>
    </lineage>
</organism>
<feature type="chain" id="PRO_1000083415" description="Formimidoylglutamase">
    <location>
        <begin position="1"/>
        <end position="311"/>
    </location>
</feature>
<feature type="binding site" evidence="1">
    <location>
        <position position="130"/>
    </location>
    <ligand>
        <name>Mn(2+)</name>
        <dbReference type="ChEBI" id="CHEBI:29035"/>
        <label>1</label>
    </ligand>
</feature>
<feature type="binding site" evidence="1">
    <location>
        <position position="155"/>
    </location>
    <ligand>
        <name>Mn(2+)</name>
        <dbReference type="ChEBI" id="CHEBI:29035"/>
        <label>1</label>
    </ligand>
</feature>
<feature type="binding site" evidence="1">
    <location>
        <position position="155"/>
    </location>
    <ligand>
        <name>Mn(2+)</name>
        <dbReference type="ChEBI" id="CHEBI:29035"/>
        <label>2</label>
    </ligand>
</feature>
<feature type="binding site" evidence="1">
    <location>
        <position position="157"/>
    </location>
    <ligand>
        <name>Mn(2+)</name>
        <dbReference type="ChEBI" id="CHEBI:29035"/>
        <label>2</label>
    </ligand>
</feature>
<feature type="binding site" evidence="1">
    <location>
        <position position="159"/>
    </location>
    <ligand>
        <name>Mn(2+)</name>
        <dbReference type="ChEBI" id="CHEBI:29035"/>
        <label>1</label>
    </ligand>
</feature>
<feature type="binding site" evidence="1">
    <location>
        <position position="242"/>
    </location>
    <ligand>
        <name>Mn(2+)</name>
        <dbReference type="ChEBI" id="CHEBI:29035"/>
        <label>1</label>
    </ligand>
</feature>
<feature type="binding site" evidence="1">
    <location>
        <position position="242"/>
    </location>
    <ligand>
        <name>Mn(2+)</name>
        <dbReference type="ChEBI" id="CHEBI:29035"/>
        <label>2</label>
    </ligand>
</feature>
<feature type="binding site" evidence="1">
    <location>
        <position position="244"/>
    </location>
    <ligand>
        <name>Mn(2+)</name>
        <dbReference type="ChEBI" id="CHEBI:29035"/>
        <label>2</label>
    </ligand>
</feature>
<sequence>MYKQGEPNLWTGRLDSETDPKKFRHFQTVTFEDLSKLEKSSMPSGVGILGYAVDKGVALNKGRIGAKEGPDAIKQAFAGLPDLNQCETLVDYGNVYHDHEELIDTQKEFAMLAAKSIANHRQTFLLGGGHDIAYAQYLATRKVYPTQSIGVINIDAHFDTRAEQQSTSGTSFRQILEEDENTDYLVLGIAQGGNTQSLFDYAKEKKIDYVFADELLSHVSPTIKDMIERFVHEHDVIMFTICMDVIDSAFAPGVSAPAVLGLYPHTVLELAKRIIPSDKVSSVSIAEMNPTYDADNRTAKLVANLVHHFLK</sequence>
<dbReference type="EC" id="3.5.3.8" evidence="1"/>
<dbReference type="EMBL" id="CP000736">
    <property type="protein sequence ID" value="ABR53227.1"/>
    <property type="molecule type" value="Genomic_DNA"/>
</dbReference>
<dbReference type="SMR" id="A6U459"/>
<dbReference type="KEGG" id="sah:SaurJH1_2402"/>
<dbReference type="HOGENOM" id="CLU_039478_2_0_9"/>
<dbReference type="UniPathway" id="UPA00379">
    <property type="reaction ID" value="UER00552"/>
</dbReference>
<dbReference type="GO" id="GO:0008783">
    <property type="term" value="F:agmatinase activity"/>
    <property type="evidence" value="ECO:0007669"/>
    <property type="project" value="TreeGrafter"/>
</dbReference>
<dbReference type="GO" id="GO:0050415">
    <property type="term" value="F:formimidoylglutamase activity"/>
    <property type="evidence" value="ECO:0007669"/>
    <property type="project" value="UniProtKB-UniRule"/>
</dbReference>
<dbReference type="GO" id="GO:0030145">
    <property type="term" value="F:manganese ion binding"/>
    <property type="evidence" value="ECO:0007669"/>
    <property type="project" value="UniProtKB-UniRule"/>
</dbReference>
<dbReference type="GO" id="GO:0019556">
    <property type="term" value="P:L-histidine catabolic process to glutamate and formamide"/>
    <property type="evidence" value="ECO:0007669"/>
    <property type="project" value="UniProtKB-UniPathway"/>
</dbReference>
<dbReference type="GO" id="GO:0019557">
    <property type="term" value="P:L-histidine catabolic process to glutamate and formate"/>
    <property type="evidence" value="ECO:0007669"/>
    <property type="project" value="UniProtKB-UniPathway"/>
</dbReference>
<dbReference type="GO" id="GO:0033389">
    <property type="term" value="P:putrescine biosynthetic process from arginine, via agmatine"/>
    <property type="evidence" value="ECO:0007669"/>
    <property type="project" value="TreeGrafter"/>
</dbReference>
<dbReference type="CDD" id="cd09988">
    <property type="entry name" value="Formimidoylglutamase"/>
    <property type="match status" value="1"/>
</dbReference>
<dbReference type="FunFam" id="3.40.800.10:FF:000015">
    <property type="entry name" value="Formimidoylglutamase"/>
    <property type="match status" value="1"/>
</dbReference>
<dbReference type="Gene3D" id="3.40.800.10">
    <property type="entry name" value="Ureohydrolase domain"/>
    <property type="match status" value="1"/>
</dbReference>
<dbReference type="HAMAP" id="MF_00737">
    <property type="entry name" value="Formimidoylglutam"/>
    <property type="match status" value="1"/>
</dbReference>
<dbReference type="InterPro" id="IPR005923">
    <property type="entry name" value="HutG"/>
</dbReference>
<dbReference type="InterPro" id="IPR006035">
    <property type="entry name" value="Ureohydrolase"/>
</dbReference>
<dbReference type="InterPro" id="IPR023696">
    <property type="entry name" value="Ureohydrolase_dom_sf"/>
</dbReference>
<dbReference type="NCBIfam" id="TIGR01227">
    <property type="entry name" value="hutG"/>
    <property type="match status" value="1"/>
</dbReference>
<dbReference type="PANTHER" id="PTHR11358">
    <property type="entry name" value="ARGINASE/AGMATINASE"/>
    <property type="match status" value="1"/>
</dbReference>
<dbReference type="PANTHER" id="PTHR11358:SF35">
    <property type="entry name" value="FORMIMIDOYLGLUTAMASE"/>
    <property type="match status" value="1"/>
</dbReference>
<dbReference type="Pfam" id="PF00491">
    <property type="entry name" value="Arginase"/>
    <property type="match status" value="1"/>
</dbReference>
<dbReference type="PIRSF" id="PIRSF036979">
    <property type="entry name" value="Arginase"/>
    <property type="match status" value="1"/>
</dbReference>
<dbReference type="SUPFAM" id="SSF52768">
    <property type="entry name" value="Arginase/deacetylase"/>
    <property type="match status" value="1"/>
</dbReference>
<dbReference type="PROSITE" id="PS51409">
    <property type="entry name" value="ARGINASE_2"/>
    <property type="match status" value="1"/>
</dbReference>
<comment type="function">
    <text evidence="1">Catalyzes the conversion of N-formimidoyl-L-glutamate to L-glutamate and formamide.</text>
</comment>
<comment type="catalytic activity">
    <reaction evidence="1">
        <text>N-formimidoyl-L-glutamate + H2O = formamide + L-glutamate</text>
        <dbReference type="Rhea" id="RHEA:22492"/>
        <dbReference type="ChEBI" id="CHEBI:15377"/>
        <dbReference type="ChEBI" id="CHEBI:16397"/>
        <dbReference type="ChEBI" id="CHEBI:29985"/>
        <dbReference type="ChEBI" id="CHEBI:58928"/>
        <dbReference type="EC" id="3.5.3.8"/>
    </reaction>
</comment>
<comment type="cofactor">
    <cofactor evidence="1">
        <name>Mn(2+)</name>
        <dbReference type="ChEBI" id="CHEBI:29035"/>
    </cofactor>
    <text evidence="1">Binds 2 manganese ions per subunit.</text>
</comment>
<comment type="pathway">
    <text evidence="1">Amino-acid degradation; L-histidine degradation into L-glutamate; L-glutamate from N-formimidoyl-L-glutamate (hydrolase route): step 1/1.</text>
</comment>
<comment type="similarity">
    <text evidence="1">Belongs to the arginase family.</text>
</comment>
<gene>
    <name evidence="1" type="primary">hutG</name>
    <name type="ordered locus">SaurJH1_2402</name>
</gene>
<name>HUTG_STAA2</name>
<evidence type="ECO:0000255" key="1">
    <source>
        <dbReference type="HAMAP-Rule" id="MF_00737"/>
    </source>
</evidence>
<proteinExistence type="inferred from homology"/>
<protein>
    <recommendedName>
        <fullName evidence="1">Formimidoylglutamase</fullName>
        <ecNumber evidence="1">3.5.3.8</ecNumber>
    </recommendedName>
    <alternativeName>
        <fullName evidence="1">Formiminoglutamase</fullName>
    </alternativeName>
    <alternativeName>
        <fullName evidence="1">Formiminoglutamate hydrolase</fullName>
    </alternativeName>
</protein>